<protein>
    <recommendedName>
        <fullName evidence="1">Threonine--tRNA ligase</fullName>
        <ecNumber evidence="1">6.1.1.3</ecNumber>
    </recommendedName>
    <alternativeName>
        <fullName evidence="1">Threonyl-tRNA synthetase</fullName>
        <shortName evidence="1">ThrRS</shortName>
    </alternativeName>
</protein>
<sequence length="620" mass="71841">MFEIAKGISNSLAKKSVGAKVDGKNVDMSYILDHDAEVEFIDIDSPEGEDIVRHSTAHLMAQAVLRLYPDTKVTIGPVIENGFYYDFDPVEQFTEEDLEKIEAEMKRIVKENIKLEKYVLPRDEAIEYFRDVDKNKYKVEVVEGIPQGEQVSFYKQGDFTDLCRGTHVPSTGYLKAFKLRTVAGAYWRGNSKNKMLQRIYGYSFSNEERLKHHLKLMEEAEKRDHRKLGKELELFFLSEYGPGFPFFLPKGMIVRNVLIDLWRREHEKAGYQQLETPIMLNKELWEISGHWFNYRENMYTSEIDELEFAIKPMNCPGGVLAFKHQLHSYKDLPARLAELGRVHRHEFSGALHGLMRVRSFTQDDSHIFMTPDQVQDEIIGVVNLIDKFYSKLFGFEYEIELSTKPEKAIGSQEIWDMAEAALAGALDKLGRKYKINPGDGAFYGPKLDFKIKDAIGRMWQCGTIQLDFNLPERFDVTYIGEDGEKHRPVMLHRVIYGSIERFIGILIEHYAGAFPMWLAPVQVKVLTLNDECIPYAKEIMNKLEELGIRAELDDRNETIGYKIREANGKYKIPMQLIIGKNEVENKEVNIRRFGSKDQFSKLLDEFYTYVVDEATIKFDK</sequence>
<proteinExistence type="inferred from homology"/>
<keyword id="KW-0030">Aminoacyl-tRNA synthetase</keyword>
<keyword id="KW-0067">ATP-binding</keyword>
<keyword id="KW-0963">Cytoplasm</keyword>
<keyword id="KW-0436">Ligase</keyword>
<keyword id="KW-0479">Metal-binding</keyword>
<keyword id="KW-0547">Nucleotide-binding</keyword>
<keyword id="KW-0648">Protein biosynthesis</keyword>
<keyword id="KW-1185">Reference proteome</keyword>
<keyword id="KW-0694">RNA-binding</keyword>
<keyword id="KW-0820">tRNA-binding</keyword>
<keyword id="KW-0862">Zinc</keyword>
<name>SYT_FUSNN</name>
<reference key="1">
    <citation type="journal article" date="2002" name="J. Bacteriol.">
        <title>Genome sequence and analysis of the oral bacterium Fusobacterium nucleatum strain ATCC 25586.</title>
        <authorList>
            <person name="Kapatral V."/>
            <person name="Anderson I."/>
            <person name="Ivanova N."/>
            <person name="Reznik G."/>
            <person name="Los T."/>
            <person name="Lykidis A."/>
            <person name="Bhattacharyya A."/>
            <person name="Bartman A."/>
            <person name="Gardner W."/>
            <person name="Grechkin G."/>
            <person name="Zhu L."/>
            <person name="Vasieva O."/>
            <person name="Chu L."/>
            <person name="Kogan Y."/>
            <person name="Chaga O."/>
            <person name="Goltsman E."/>
            <person name="Bernal A."/>
            <person name="Larsen N."/>
            <person name="D'Souza M."/>
            <person name="Walunas T."/>
            <person name="Pusch G."/>
            <person name="Haselkorn R."/>
            <person name="Fonstein M."/>
            <person name="Kyrpides N.C."/>
            <person name="Overbeek R."/>
        </authorList>
    </citation>
    <scope>NUCLEOTIDE SEQUENCE [LARGE SCALE GENOMIC DNA]</scope>
    <source>
        <strain>ATCC 25586 / DSM 15643 / BCRC 10681 / CIP 101130 / JCM 8532 / KCTC 2640 / LMG 13131 / VPI 4355</strain>
    </source>
</reference>
<dbReference type="EC" id="6.1.1.3" evidence="1"/>
<dbReference type="EMBL" id="AE009951">
    <property type="protein sequence ID" value="AAL94807.1"/>
    <property type="molecule type" value="Genomic_DNA"/>
</dbReference>
<dbReference type="RefSeq" id="NP_603508.1">
    <property type="nucleotide sequence ID" value="NC_003454.1"/>
</dbReference>
<dbReference type="SMR" id="Q8RFS6"/>
<dbReference type="FunCoup" id="Q8RFS6">
    <property type="interactions" value="354"/>
</dbReference>
<dbReference type="STRING" id="190304.FN0611"/>
<dbReference type="PaxDb" id="190304-FN0611"/>
<dbReference type="EnsemblBacteria" id="AAL94807">
    <property type="protein sequence ID" value="AAL94807"/>
    <property type="gene ID" value="FN0611"/>
</dbReference>
<dbReference type="KEGG" id="fnu:FN0611"/>
<dbReference type="PATRIC" id="fig|190304.8.peg.1176"/>
<dbReference type="eggNOG" id="COG0441">
    <property type="taxonomic scope" value="Bacteria"/>
</dbReference>
<dbReference type="HOGENOM" id="CLU_008554_0_1_0"/>
<dbReference type="InParanoid" id="Q8RFS6"/>
<dbReference type="BioCyc" id="FNUC190304:G1FZS-1198-MONOMER"/>
<dbReference type="Proteomes" id="UP000002521">
    <property type="component" value="Chromosome"/>
</dbReference>
<dbReference type="GO" id="GO:0005737">
    <property type="term" value="C:cytoplasm"/>
    <property type="evidence" value="ECO:0007669"/>
    <property type="project" value="UniProtKB-SubCell"/>
</dbReference>
<dbReference type="GO" id="GO:0005524">
    <property type="term" value="F:ATP binding"/>
    <property type="evidence" value="ECO:0007669"/>
    <property type="project" value="UniProtKB-UniRule"/>
</dbReference>
<dbReference type="GO" id="GO:0046872">
    <property type="term" value="F:metal ion binding"/>
    <property type="evidence" value="ECO:0007669"/>
    <property type="project" value="UniProtKB-KW"/>
</dbReference>
<dbReference type="GO" id="GO:0004829">
    <property type="term" value="F:threonine-tRNA ligase activity"/>
    <property type="evidence" value="ECO:0000318"/>
    <property type="project" value="GO_Central"/>
</dbReference>
<dbReference type="GO" id="GO:0000049">
    <property type="term" value="F:tRNA binding"/>
    <property type="evidence" value="ECO:0007669"/>
    <property type="project" value="UniProtKB-KW"/>
</dbReference>
<dbReference type="GO" id="GO:0006435">
    <property type="term" value="P:threonyl-tRNA aminoacylation"/>
    <property type="evidence" value="ECO:0000318"/>
    <property type="project" value="GO_Central"/>
</dbReference>
<dbReference type="CDD" id="cd01667">
    <property type="entry name" value="TGS_ThrRS"/>
    <property type="match status" value="1"/>
</dbReference>
<dbReference type="CDD" id="cd00860">
    <property type="entry name" value="ThrRS_anticodon"/>
    <property type="match status" value="1"/>
</dbReference>
<dbReference type="CDD" id="cd00771">
    <property type="entry name" value="ThrRS_core"/>
    <property type="match status" value="1"/>
</dbReference>
<dbReference type="FunFam" id="3.30.54.20:FF:000002">
    <property type="entry name" value="Threonine--tRNA ligase"/>
    <property type="match status" value="1"/>
</dbReference>
<dbReference type="FunFam" id="3.30.930.10:FF:000002">
    <property type="entry name" value="Threonine--tRNA ligase"/>
    <property type="match status" value="1"/>
</dbReference>
<dbReference type="FunFam" id="3.40.50.800:FF:000001">
    <property type="entry name" value="Threonine--tRNA ligase"/>
    <property type="match status" value="1"/>
</dbReference>
<dbReference type="FunFam" id="3.30.980.10:FF:000005">
    <property type="entry name" value="Threonyl-tRNA synthetase, mitochondrial"/>
    <property type="match status" value="1"/>
</dbReference>
<dbReference type="Gene3D" id="3.10.20.30">
    <property type="match status" value="1"/>
</dbReference>
<dbReference type="Gene3D" id="3.30.54.20">
    <property type="match status" value="1"/>
</dbReference>
<dbReference type="Gene3D" id="3.40.50.800">
    <property type="entry name" value="Anticodon-binding domain"/>
    <property type="match status" value="1"/>
</dbReference>
<dbReference type="Gene3D" id="3.30.930.10">
    <property type="entry name" value="Bira Bifunctional Protein, Domain 2"/>
    <property type="match status" value="1"/>
</dbReference>
<dbReference type="Gene3D" id="3.30.980.10">
    <property type="entry name" value="Threonyl-trna Synthetase, Chain A, domain 2"/>
    <property type="match status" value="1"/>
</dbReference>
<dbReference type="HAMAP" id="MF_00184">
    <property type="entry name" value="Thr_tRNA_synth"/>
    <property type="match status" value="1"/>
</dbReference>
<dbReference type="InterPro" id="IPR002314">
    <property type="entry name" value="aa-tRNA-synt_IIb"/>
</dbReference>
<dbReference type="InterPro" id="IPR006195">
    <property type="entry name" value="aa-tRNA-synth_II"/>
</dbReference>
<dbReference type="InterPro" id="IPR045864">
    <property type="entry name" value="aa-tRNA-synth_II/BPL/LPL"/>
</dbReference>
<dbReference type="InterPro" id="IPR004154">
    <property type="entry name" value="Anticodon-bd"/>
</dbReference>
<dbReference type="InterPro" id="IPR036621">
    <property type="entry name" value="Anticodon-bd_dom_sf"/>
</dbReference>
<dbReference type="InterPro" id="IPR012675">
    <property type="entry name" value="Beta-grasp_dom_sf"/>
</dbReference>
<dbReference type="InterPro" id="IPR004095">
    <property type="entry name" value="TGS"/>
</dbReference>
<dbReference type="InterPro" id="IPR012676">
    <property type="entry name" value="TGS-like"/>
</dbReference>
<dbReference type="InterPro" id="IPR002320">
    <property type="entry name" value="Thr-tRNA-ligase_IIa"/>
</dbReference>
<dbReference type="InterPro" id="IPR018163">
    <property type="entry name" value="Thr/Ala-tRNA-synth_IIc_edit"/>
</dbReference>
<dbReference type="InterPro" id="IPR047246">
    <property type="entry name" value="ThrRS_anticodon"/>
</dbReference>
<dbReference type="InterPro" id="IPR033728">
    <property type="entry name" value="ThrRS_core"/>
</dbReference>
<dbReference type="InterPro" id="IPR012947">
    <property type="entry name" value="tRNA_SAD"/>
</dbReference>
<dbReference type="NCBIfam" id="TIGR00418">
    <property type="entry name" value="thrS"/>
    <property type="match status" value="1"/>
</dbReference>
<dbReference type="PANTHER" id="PTHR11451:SF44">
    <property type="entry name" value="THREONINE--TRNA LIGASE, CHLOROPLASTIC_MITOCHONDRIAL 2"/>
    <property type="match status" value="1"/>
</dbReference>
<dbReference type="PANTHER" id="PTHR11451">
    <property type="entry name" value="THREONINE-TRNA LIGASE"/>
    <property type="match status" value="1"/>
</dbReference>
<dbReference type="Pfam" id="PF03129">
    <property type="entry name" value="HGTP_anticodon"/>
    <property type="match status" value="1"/>
</dbReference>
<dbReference type="Pfam" id="PF02824">
    <property type="entry name" value="TGS"/>
    <property type="match status" value="1"/>
</dbReference>
<dbReference type="Pfam" id="PF00587">
    <property type="entry name" value="tRNA-synt_2b"/>
    <property type="match status" value="1"/>
</dbReference>
<dbReference type="Pfam" id="PF07973">
    <property type="entry name" value="tRNA_SAD"/>
    <property type="match status" value="1"/>
</dbReference>
<dbReference type="PRINTS" id="PR01047">
    <property type="entry name" value="TRNASYNTHTHR"/>
</dbReference>
<dbReference type="SMART" id="SM00863">
    <property type="entry name" value="tRNA_SAD"/>
    <property type="match status" value="1"/>
</dbReference>
<dbReference type="SUPFAM" id="SSF52954">
    <property type="entry name" value="Class II aaRS ABD-related"/>
    <property type="match status" value="1"/>
</dbReference>
<dbReference type="SUPFAM" id="SSF55681">
    <property type="entry name" value="Class II aaRS and biotin synthetases"/>
    <property type="match status" value="1"/>
</dbReference>
<dbReference type="SUPFAM" id="SSF81271">
    <property type="entry name" value="TGS-like"/>
    <property type="match status" value="1"/>
</dbReference>
<dbReference type="SUPFAM" id="SSF55186">
    <property type="entry name" value="ThrRS/AlaRS common domain"/>
    <property type="match status" value="1"/>
</dbReference>
<dbReference type="PROSITE" id="PS50862">
    <property type="entry name" value="AA_TRNA_LIGASE_II"/>
    <property type="match status" value="1"/>
</dbReference>
<dbReference type="PROSITE" id="PS51880">
    <property type="entry name" value="TGS"/>
    <property type="match status" value="1"/>
</dbReference>
<gene>
    <name evidence="1" type="primary">thrS</name>
    <name type="ordered locus">FN0611</name>
</gene>
<feature type="chain" id="PRO_0000100981" description="Threonine--tRNA ligase">
    <location>
        <begin position="1"/>
        <end position="620"/>
    </location>
</feature>
<feature type="domain" description="TGS" evidence="2">
    <location>
        <begin position="1"/>
        <end position="42"/>
    </location>
</feature>
<feature type="region of interest" description="Catalytic" evidence="1">
    <location>
        <begin position="224"/>
        <end position="515"/>
    </location>
</feature>
<feature type="binding site" evidence="1">
    <location>
        <position position="315"/>
    </location>
    <ligand>
        <name>Zn(2+)</name>
        <dbReference type="ChEBI" id="CHEBI:29105"/>
    </ligand>
</feature>
<feature type="binding site" evidence="1">
    <location>
        <position position="366"/>
    </location>
    <ligand>
        <name>Zn(2+)</name>
        <dbReference type="ChEBI" id="CHEBI:29105"/>
    </ligand>
</feature>
<feature type="binding site" evidence="1">
    <location>
        <position position="492"/>
    </location>
    <ligand>
        <name>Zn(2+)</name>
        <dbReference type="ChEBI" id="CHEBI:29105"/>
    </ligand>
</feature>
<accession>Q8RFS6</accession>
<evidence type="ECO:0000255" key="1">
    <source>
        <dbReference type="HAMAP-Rule" id="MF_00184"/>
    </source>
</evidence>
<evidence type="ECO:0000255" key="2">
    <source>
        <dbReference type="PROSITE-ProRule" id="PRU01228"/>
    </source>
</evidence>
<organism>
    <name type="scientific">Fusobacterium nucleatum subsp. nucleatum (strain ATCC 25586 / DSM 15643 / BCRC 10681 / CIP 101130 / JCM 8532 / KCTC 2640 / LMG 13131 / VPI 4355)</name>
    <dbReference type="NCBI Taxonomy" id="190304"/>
    <lineage>
        <taxon>Bacteria</taxon>
        <taxon>Fusobacteriati</taxon>
        <taxon>Fusobacteriota</taxon>
        <taxon>Fusobacteriia</taxon>
        <taxon>Fusobacteriales</taxon>
        <taxon>Fusobacteriaceae</taxon>
        <taxon>Fusobacterium</taxon>
    </lineage>
</organism>
<comment type="function">
    <text evidence="1">Catalyzes the attachment of threonine to tRNA(Thr) in a two-step reaction: L-threonine is first activated by ATP to form Thr-AMP and then transferred to the acceptor end of tRNA(Thr). Also edits incorrectly charged L-seryl-tRNA(Thr).</text>
</comment>
<comment type="catalytic activity">
    <reaction evidence="1">
        <text>tRNA(Thr) + L-threonine + ATP = L-threonyl-tRNA(Thr) + AMP + diphosphate + H(+)</text>
        <dbReference type="Rhea" id="RHEA:24624"/>
        <dbReference type="Rhea" id="RHEA-COMP:9670"/>
        <dbReference type="Rhea" id="RHEA-COMP:9704"/>
        <dbReference type="ChEBI" id="CHEBI:15378"/>
        <dbReference type="ChEBI" id="CHEBI:30616"/>
        <dbReference type="ChEBI" id="CHEBI:33019"/>
        <dbReference type="ChEBI" id="CHEBI:57926"/>
        <dbReference type="ChEBI" id="CHEBI:78442"/>
        <dbReference type="ChEBI" id="CHEBI:78534"/>
        <dbReference type="ChEBI" id="CHEBI:456215"/>
        <dbReference type="EC" id="6.1.1.3"/>
    </reaction>
</comment>
<comment type="cofactor">
    <cofactor evidence="1">
        <name>Zn(2+)</name>
        <dbReference type="ChEBI" id="CHEBI:29105"/>
    </cofactor>
    <text evidence="1">Binds 1 zinc ion per subunit.</text>
</comment>
<comment type="subunit">
    <text evidence="1">Homodimer.</text>
</comment>
<comment type="subcellular location">
    <subcellularLocation>
        <location evidence="1">Cytoplasm</location>
    </subcellularLocation>
</comment>
<comment type="similarity">
    <text evidence="1">Belongs to the class-II aminoacyl-tRNA synthetase family.</text>
</comment>